<comment type="subcellular location">
    <subcellularLocation>
        <location evidence="1">Virion</location>
    </subcellularLocation>
</comment>
<gene>
    <name type="ordered locus">MIMI_L48</name>
</gene>
<accession>Q5UPC4</accession>
<feature type="chain" id="PRO_0000247298" description="Uncharacterized protein L48">
    <location>
        <begin position="1"/>
        <end position="120"/>
    </location>
</feature>
<protein>
    <recommendedName>
        <fullName>Uncharacterized protein L48</fullName>
    </recommendedName>
</protein>
<proteinExistence type="evidence at protein level"/>
<keyword id="KW-1185">Reference proteome</keyword>
<keyword id="KW-0946">Virion</keyword>
<sequence length="120" mass="14578">MDIFLCPVCQSGYRYFYTLYLPNNNIDVILFCDECECVWIDPEYIDYQDAVSNDFLVDKYKVTSCKILFNKEISGWSTNKDIKNSRWDNFIENYEQFVFQNIYHLDKNKRYPFLYLYATN</sequence>
<dbReference type="EMBL" id="AY653733">
    <property type="protein sequence ID" value="AAV50323.1"/>
    <property type="molecule type" value="Genomic_DNA"/>
</dbReference>
<dbReference type="KEGG" id="vg:9924636"/>
<dbReference type="OrthoDB" id="34533at10239"/>
<dbReference type="Proteomes" id="UP000001134">
    <property type="component" value="Genome"/>
</dbReference>
<dbReference type="GO" id="GO:0044423">
    <property type="term" value="C:virion component"/>
    <property type="evidence" value="ECO:0007669"/>
    <property type="project" value="UniProtKB-KW"/>
</dbReference>
<reference key="1">
    <citation type="journal article" date="2004" name="Science">
        <title>The 1.2-megabase genome sequence of Mimivirus.</title>
        <authorList>
            <person name="Raoult D."/>
            <person name="Audic S."/>
            <person name="Robert C."/>
            <person name="Abergel C."/>
            <person name="Renesto P."/>
            <person name="Ogata H."/>
            <person name="La Scola B."/>
            <person name="Susan M."/>
            <person name="Claverie J.-M."/>
        </authorList>
    </citation>
    <scope>NUCLEOTIDE SEQUENCE [LARGE SCALE GENOMIC DNA]</scope>
    <source>
        <strain>Rowbotham-Bradford</strain>
    </source>
</reference>
<reference key="2">
    <citation type="journal article" date="2006" name="J. Virol.">
        <title>Mimivirus giant particles incorporate a large fraction of anonymous and unique gene products.</title>
        <authorList>
            <person name="Renesto P."/>
            <person name="Abergel C."/>
            <person name="Decloquement P."/>
            <person name="Moinier D."/>
            <person name="Azza S."/>
            <person name="Ogata H."/>
            <person name="Fourquet P."/>
            <person name="Gorvel J.-P."/>
            <person name="Claverie J.-M."/>
            <person name="Raoult D."/>
        </authorList>
    </citation>
    <scope>IDENTIFICATION BY MASS SPECTROMETRY [LARGE SCALE ANALYSIS]</scope>
    <scope>SUBCELLULAR LOCATION</scope>
</reference>
<organism>
    <name type="scientific">Acanthamoeba polyphaga mimivirus</name>
    <name type="common">APMV</name>
    <dbReference type="NCBI Taxonomy" id="212035"/>
    <lineage>
        <taxon>Viruses</taxon>
        <taxon>Varidnaviria</taxon>
        <taxon>Bamfordvirae</taxon>
        <taxon>Nucleocytoviricota</taxon>
        <taxon>Megaviricetes</taxon>
        <taxon>Imitervirales</taxon>
        <taxon>Mimiviridae</taxon>
        <taxon>Megamimivirinae</taxon>
        <taxon>Mimivirus</taxon>
        <taxon>Mimivirus bradfordmassiliense</taxon>
    </lineage>
</organism>
<organismHost>
    <name type="scientific">Acanthamoeba polyphaga</name>
    <name type="common">Amoeba</name>
    <dbReference type="NCBI Taxonomy" id="5757"/>
</organismHost>
<evidence type="ECO:0000269" key="1">
    <source>
    </source>
</evidence>
<name>YL048_MIMIV</name>